<evidence type="ECO:0000255" key="1">
    <source>
        <dbReference type="HAMAP-Rule" id="MF_00321"/>
    </source>
</evidence>
<dbReference type="EMBL" id="CP000668">
    <property type="protein sequence ID" value="ABP42228.1"/>
    <property type="molecule type" value="Genomic_DNA"/>
</dbReference>
<dbReference type="SMR" id="A4TSG6"/>
<dbReference type="KEGG" id="ypp:YPDSF_3885"/>
<dbReference type="PATRIC" id="fig|386656.14.peg.632"/>
<dbReference type="GO" id="GO:0005829">
    <property type="term" value="C:cytosol"/>
    <property type="evidence" value="ECO:0007669"/>
    <property type="project" value="TreeGrafter"/>
</dbReference>
<dbReference type="GO" id="GO:0005525">
    <property type="term" value="F:GTP binding"/>
    <property type="evidence" value="ECO:0007669"/>
    <property type="project" value="UniProtKB-UniRule"/>
</dbReference>
<dbReference type="GO" id="GO:0046872">
    <property type="term" value="F:metal ion binding"/>
    <property type="evidence" value="ECO:0007669"/>
    <property type="project" value="UniProtKB-KW"/>
</dbReference>
<dbReference type="GO" id="GO:0000917">
    <property type="term" value="P:division septum assembly"/>
    <property type="evidence" value="ECO:0007669"/>
    <property type="project" value="UniProtKB-KW"/>
</dbReference>
<dbReference type="CDD" id="cd01876">
    <property type="entry name" value="YihA_EngB"/>
    <property type="match status" value="1"/>
</dbReference>
<dbReference type="FunFam" id="3.40.50.300:FF:000098">
    <property type="entry name" value="Probable GTP-binding protein EngB"/>
    <property type="match status" value="1"/>
</dbReference>
<dbReference type="Gene3D" id="3.40.50.300">
    <property type="entry name" value="P-loop containing nucleotide triphosphate hydrolases"/>
    <property type="match status" value="1"/>
</dbReference>
<dbReference type="HAMAP" id="MF_00321">
    <property type="entry name" value="GTPase_EngB"/>
    <property type="match status" value="1"/>
</dbReference>
<dbReference type="InterPro" id="IPR030393">
    <property type="entry name" value="G_ENGB_dom"/>
</dbReference>
<dbReference type="InterPro" id="IPR006073">
    <property type="entry name" value="GTP-bd"/>
</dbReference>
<dbReference type="InterPro" id="IPR019987">
    <property type="entry name" value="GTP-bd_ribosome_bio_YsxC"/>
</dbReference>
<dbReference type="InterPro" id="IPR027417">
    <property type="entry name" value="P-loop_NTPase"/>
</dbReference>
<dbReference type="NCBIfam" id="TIGR03598">
    <property type="entry name" value="GTPase_YsxC"/>
    <property type="match status" value="1"/>
</dbReference>
<dbReference type="PANTHER" id="PTHR11649:SF13">
    <property type="entry name" value="ENGB-TYPE G DOMAIN-CONTAINING PROTEIN"/>
    <property type="match status" value="1"/>
</dbReference>
<dbReference type="PANTHER" id="PTHR11649">
    <property type="entry name" value="MSS1/TRME-RELATED GTP-BINDING PROTEIN"/>
    <property type="match status" value="1"/>
</dbReference>
<dbReference type="Pfam" id="PF01926">
    <property type="entry name" value="MMR_HSR1"/>
    <property type="match status" value="1"/>
</dbReference>
<dbReference type="SUPFAM" id="SSF52540">
    <property type="entry name" value="P-loop containing nucleoside triphosphate hydrolases"/>
    <property type="match status" value="1"/>
</dbReference>
<dbReference type="PROSITE" id="PS51706">
    <property type="entry name" value="G_ENGB"/>
    <property type="match status" value="1"/>
</dbReference>
<keyword id="KW-0131">Cell cycle</keyword>
<keyword id="KW-0132">Cell division</keyword>
<keyword id="KW-0342">GTP-binding</keyword>
<keyword id="KW-0460">Magnesium</keyword>
<keyword id="KW-0479">Metal-binding</keyword>
<keyword id="KW-0547">Nucleotide-binding</keyword>
<keyword id="KW-0717">Septation</keyword>
<protein>
    <recommendedName>
        <fullName evidence="1">Probable GTP-binding protein EngB</fullName>
    </recommendedName>
</protein>
<comment type="function">
    <text evidence="1">Necessary for normal cell division and for the maintenance of normal septation.</text>
</comment>
<comment type="cofactor">
    <cofactor evidence="1">
        <name>Mg(2+)</name>
        <dbReference type="ChEBI" id="CHEBI:18420"/>
    </cofactor>
</comment>
<comment type="similarity">
    <text evidence="1">Belongs to the TRAFAC class TrmE-Era-EngA-EngB-Septin-like GTPase superfamily. EngB GTPase family.</text>
</comment>
<proteinExistence type="inferred from homology"/>
<name>ENGB_YERPP</name>
<accession>A4TSG6</accession>
<organism>
    <name type="scientific">Yersinia pestis (strain Pestoides F)</name>
    <dbReference type="NCBI Taxonomy" id="386656"/>
    <lineage>
        <taxon>Bacteria</taxon>
        <taxon>Pseudomonadati</taxon>
        <taxon>Pseudomonadota</taxon>
        <taxon>Gammaproteobacteria</taxon>
        <taxon>Enterobacterales</taxon>
        <taxon>Yersiniaceae</taxon>
        <taxon>Yersinia</taxon>
    </lineage>
</organism>
<reference key="1">
    <citation type="submission" date="2007-02" db="EMBL/GenBank/DDBJ databases">
        <title>Complete sequence of chromosome of Yersinia pestis Pestoides F.</title>
        <authorList>
            <consortium name="US DOE Joint Genome Institute"/>
            <person name="Copeland A."/>
            <person name="Lucas S."/>
            <person name="Lapidus A."/>
            <person name="Barry K."/>
            <person name="Detter J.C."/>
            <person name="Glavina del Rio T."/>
            <person name="Hammon N."/>
            <person name="Israni S."/>
            <person name="Dalin E."/>
            <person name="Tice H."/>
            <person name="Pitluck S."/>
            <person name="Di Bartolo G."/>
            <person name="Chain P."/>
            <person name="Malfatti S."/>
            <person name="Shin M."/>
            <person name="Vergez L."/>
            <person name="Schmutz J."/>
            <person name="Larimer F."/>
            <person name="Land M."/>
            <person name="Hauser L."/>
            <person name="Worsham P."/>
            <person name="Chu M."/>
            <person name="Bearden S."/>
            <person name="Garcia E."/>
            <person name="Richardson P."/>
        </authorList>
    </citation>
    <scope>NUCLEOTIDE SEQUENCE [LARGE SCALE GENOMIC DNA]</scope>
    <source>
        <strain>Pestoides F</strain>
    </source>
</reference>
<gene>
    <name evidence="1" type="primary">engB</name>
    <name type="ordered locus">YPDSF_3885</name>
</gene>
<feature type="chain" id="PRO_1000005868" description="Probable GTP-binding protein EngB">
    <location>
        <begin position="1"/>
        <end position="216"/>
    </location>
</feature>
<feature type="domain" description="EngB-type G" evidence="1">
    <location>
        <begin position="27"/>
        <end position="201"/>
    </location>
</feature>
<feature type="binding site" evidence="1">
    <location>
        <begin position="35"/>
        <end position="42"/>
    </location>
    <ligand>
        <name>GTP</name>
        <dbReference type="ChEBI" id="CHEBI:37565"/>
    </ligand>
</feature>
<feature type="binding site" evidence="1">
    <location>
        <position position="42"/>
    </location>
    <ligand>
        <name>Mg(2+)</name>
        <dbReference type="ChEBI" id="CHEBI:18420"/>
    </ligand>
</feature>
<feature type="binding site" evidence="1">
    <location>
        <begin position="62"/>
        <end position="66"/>
    </location>
    <ligand>
        <name>GTP</name>
        <dbReference type="ChEBI" id="CHEBI:37565"/>
    </ligand>
</feature>
<feature type="binding site" evidence="1">
    <location>
        <position position="64"/>
    </location>
    <ligand>
        <name>Mg(2+)</name>
        <dbReference type="ChEBI" id="CHEBI:18420"/>
    </ligand>
</feature>
<feature type="binding site" evidence="1">
    <location>
        <begin position="80"/>
        <end position="83"/>
    </location>
    <ligand>
        <name>GTP</name>
        <dbReference type="ChEBI" id="CHEBI:37565"/>
    </ligand>
</feature>
<feature type="binding site" evidence="1">
    <location>
        <begin position="147"/>
        <end position="150"/>
    </location>
    <ligand>
        <name>GTP</name>
        <dbReference type="ChEBI" id="CHEBI:37565"/>
    </ligand>
</feature>
<feature type="binding site" evidence="1">
    <location>
        <begin position="180"/>
        <end position="182"/>
    </location>
    <ligand>
        <name>GTP</name>
        <dbReference type="ChEBI" id="CHEBI:37565"/>
    </ligand>
</feature>
<sequence length="216" mass="24205">MTIRNYNYHMTHFVISAPDIRHLPRDEGIEVAFAGRSNAGKSSALNTLTNQKGLARTSKTPGRTQLINLFEVVDGVRLVDLPGYGYAEVPEEMKLKWQRALGEYLQKRNCLKGLVVLMDIRHPLKDLDQQMITWAVAVGTPVLLLLTKADKLASGARKAQLNLVREAIIPFMGDIQVEAFSSLKKIGVDKLREKLDTWFSEIPPEVMAEEFDGEGE</sequence>